<dbReference type="EC" id="1.17.1.8" evidence="1"/>
<dbReference type="EMBL" id="AE016830">
    <property type="protein sequence ID" value="AAO81344.1"/>
    <property type="molecule type" value="Genomic_DNA"/>
</dbReference>
<dbReference type="RefSeq" id="NP_815274.1">
    <property type="nucleotide sequence ID" value="NC_004668.1"/>
</dbReference>
<dbReference type="RefSeq" id="WP_002357591.1">
    <property type="nucleotide sequence ID" value="NZ_KE136528.1"/>
</dbReference>
<dbReference type="SMR" id="Q834S6"/>
<dbReference type="STRING" id="226185.EF_1557"/>
<dbReference type="EnsemblBacteria" id="AAO81344">
    <property type="protein sequence ID" value="AAO81344"/>
    <property type="gene ID" value="EF_1557"/>
</dbReference>
<dbReference type="KEGG" id="efa:EF1557"/>
<dbReference type="PATRIC" id="fig|226185.45.peg.1948"/>
<dbReference type="eggNOG" id="COG0289">
    <property type="taxonomic scope" value="Bacteria"/>
</dbReference>
<dbReference type="HOGENOM" id="CLU_047479_0_1_9"/>
<dbReference type="UniPathway" id="UPA00034">
    <property type="reaction ID" value="UER00018"/>
</dbReference>
<dbReference type="Proteomes" id="UP000001415">
    <property type="component" value="Chromosome"/>
</dbReference>
<dbReference type="GO" id="GO:0005829">
    <property type="term" value="C:cytosol"/>
    <property type="evidence" value="ECO:0007669"/>
    <property type="project" value="TreeGrafter"/>
</dbReference>
<dbReference type="GO" id="GO:0008839">
    <property type="term" value="F:4-hydroxy-tetrahydrodipicolinate reductase"/>
    <property type="evidence" value="ECO:0007669"/>
    <property type="project" value="UniProtKB-EC"/>
</dbReference>
<dbReference type="GO" id="GO:0051287">
    <property type="term" value="F:NAD binding"/>
    <property type="evidence" value="ECO:0007669"/>
    <property type="project" value="UniProtKB-UniRule"/>
</dbReference>
<dbReference type="GO" id="GO:0050661">
    <property type="term" value="F:NADP binding"/>
    <property type="evidence" value="ECO:0007669"/>
    <property type="project" value="UniProtKB-UniRule"/>
</dbReference>
<dbReference type="GO" id="GO:0016726">
    <property type="term" value="F:oxidoreductase activity, acting on CH or CH2 groups, NAD or NADP as acceptor"/>
    <property type="evidence" value="ECO:0007669"/>
    <property type="project" value="UniProtKB-UniRule"/>
</dbReference>
<dbReference type="GO" id="GO:0019877">
    <property type="term" value="P:diaminopimelate biosynthetic process"/>
    <property type="evidence" value="ECO:0007669"/>
    <property type="project" value="UniProtKB-UniRule"/>
</dbReference>
<dbReference type="GO" id="GO:0009089">
    <property type="term" value="P:lysine biosynthetic process via diaminopimelate"/>
    <property type="evidence" value="ECO:0007669"/>
    <property type="project" value="UniProtKB-UniRule"/>
</dbReference>
<dbReference type="CDD" id="cd02274">
    <property type="entry name" value="DHDPR_N"/>
    <property type="match status" value="1"/>
</dbReference>
<dbReference type="FunFam" id="3.30.360.10:FF:000009">
    <property type="entry name" value="4-hydroxy-tetrahydrodipicolinate reductase"/>
    <property type="match status" value="1"/>
</dbReference>
<dbReference type="Gene3D" id="3.30.360.10">
    <property type="entry name" value="Dihydrodipicolinate Reductase, domain 2"/>
    <property type="match status" value="1"/>
</dbReference>
<dbReference type="Gene3D" id="3.40.50.720">
    <property type="entry name" value="NAD(P)-binding Rossmann-like Domain"/>
    <property type="match status" value="1"/>
</dbReference>
<dbReference type="HAMAP" id="MF_00102">
    <property type="entry name" value="DapB"/>
    <property type="match status" value="1"/>
</dbReference>
<dbReference type="InterPro" id="IPR022663">
    <property type="entry name" value="DapB_C"/>
</dbReference>
<dbReference type="InterPro" id="IPR000846">
    <property type="entry name" value="DapB_N"/>
</dbReference>
<dbReference type="InterPro" id="IPR022664">
    <property type="entry name" value="DapB_N_CS"/>
</dbReference>
<dbReference type="InterPro" id="IPR023940">
    <property type="entry name" value="DHDPR_bac"/>
</dbReference>
<dbReference type="InterPro" id="IPR036291">
    <property type="entry name" value="NAD(P)-bd_dom_sf"/>
</dbReference>
<dbReference type="NCBIfam" id="TIGR00036">
    <property type="entry name" value="dapB"/>
    <property type="match status" value="1"/>
</dbReference>
<dbReference type="PANTHER" id="PTHR20836:SF0">
    <property type="entry name" value="4-HYDROXY-TETRAHYDRODIPICOLINATE REDUCTASE 1, CHLOROPLASTIC-RELATED"/>
    <property type="match status" value="1"/>
</dbReference>
<dbReference type="PANTHER" id="PTHR20836">
    <property type="entry name" value="DIHYDRODIPICOLINATE REDUCTASE"/>
    <property type="match status" value="1"/>
</dbReference>
<dbReference type="Pfam" id="PF05173">
    <property type="entry name" value="DapB_C"/>
    <property type="match status" value="1"/>
</dbReference>
<dbReference type="Pfam" id="PF01113">
    <property type="entry name" value="DapB_N"/>
    <property type="match status" value="1"/>
</dbReference>
<dbReference type="PIRSF" id="PIRSF000161">
    <property type="entry name" value="DHPR"/>
    <property type="match status" value="1"/>
</dbReference>
<dbReference type="SUPFAM" id="SSF55347">
    <property type="entry name" value="Glyceraldehyde-3-phosphate dehydrogenase-like, C-terminal domain"/>
    <property type="match status" value="1"/>
</dbReference>
<dbReference type="SUPFAM" id="SSF51735">
    <property type="entry name" value="NAD(P)-binding Rossmann-fold domains"/>
    <property type="match status" value="1"/>
</dbReference>
<dbReference type="PROSITE" id="PS01298">
    <property type="entry name" value="DAPB"/>
    <property type="match status" value="1"/>
</dbReference>
<comment type="function">
    <text evidence="1">Catalyzes the conversion of 4-hydroxy-tetrahydrodipicolinate (HTPA) to tetrahydrodipicolinate.</text>
</comment>
<comment type="catalytic activity">
    <reaction evidence="1">
        <text>(S)-2,3,4,5-tetrahydrodipicolinate + NAD(+) + H2O = (2S,4S)-4-hydroxy-2,3,4,5-tetrahydrodipicolinate + NADH + H(+)</text>
        <dbReference type="Rhea" id="RHEA:35323"/>
        <dbReference type="ChEBI" id="CHEBI:15377"/>
        <dbReference type="ChEBI" id="CHEBI:15378"/>
        <dbReference type="ChEBI" id="CHEBI:16845"/>
        <dbReference type="ChEBI" id="CHEBI:57540"/>
        <dbReference type="ChEBI" id="CHEBI:57945"/>
        <dbReference type="ChEBI" id="CHEBI:67139"/>
        <dbReference type="EC" id="1.17.1.8"/>
    </reaction>
</comment>
<comment type="catalytic activity">
    <reaction evidence="1">
        <text>(S)-2,3,4,5-tetrahydrodipicolinate + NADP(+) + H2O = (2S,4S)-4-hydroxy-2,3,4,5-tetrahydrodipicolinate + NADPH + H(+)</text>
        <dbReference type="Rhea" id="RHEA:35331"/>
        <dbReference type="ChEBI" id="CHEBI:15377"/>
        <dbReference type="ChEBI" id="CHEBI:15378"/>
        <dbReference type="ChEBI" id="CHEBI:16845"/>
        <dbReference type="ChEBI" id="CHEBI:57783"/>
        <dbReference type="ChEBI" id="CHEBI:58349"/>
        <dbReference type="ChEBI" id="CHEBI:67139"/>
        <dbReference type="EC" id="1.17.1.8"/>
    </reaction>
</comment>
<comment type="pathway">
    <text evidence="1">Amino-acid biosynthesis; L-lysine biosynthesis via DAP pathway; (S)-tetrahydrodipicolinate from L-aspartate: step 4/4.</text>
</comment>
<comment type="subcellular location">
    <subcellularLocation>
        <location evidence="1">Cytoplasm</location>
    </subcellularLocation>
</comment>
<comment type="similarity">
    <text evidence="1">Belongs to the DapB family.</text>
</comment>
<comment type="caution">
    <text evidence="2">Was originally thought to be a dihydrodipicolinate reductase (DHDPR), catalyzing the conversion of dihydrodipicolinate to tetrahydrodipicolinate. However, it was shown in E.coli that the substrate of the enzymatic reaction is not dihydrodipicolinate (DHDP) but in fact (2S,4S)-4-hydroxy-2,3,4,5-tetrahydrodipicolinic acid (HTPA), the product released by the DapA-catalyzed reaction.</text>
</comment>
<organism>
    <name type="scientific">Enterococcus faecalis (strain ATCC 700802 / V583)</name>
    <dbReference type="NCBI Taxonomy" id="226185"/>
    <lineage>
        <taxon>Bacteria</taxon>
        <taxon>Bacillati</taxon>
        <taxon>Bacillota</taxon>
        <taxon>Bacilli</taxon>
        <taxon>Lactobacillales</taxon>
        <taxon>Enterococcaceae</taxon>
        <taxon>Enterococcus</taxon>
    </lineage>
</organism>
<reference key="1">
    <citation type="journal article" date="2003" name="Science">
        <title>Role of mobile DNA in the evolution of vancomycin-resistant Enterococcus faecalis.</title>
        <authorList>
            <person name="Paulsen I.T."/>
            <person name="Banerjei L."/>
            <person name="Myers G.S.A."/>
            <person name="Nelson K.E."/>
            <person name="Seshadri R."/>
            <person name="Read T.D."/>
            <person name="Fouts D.E."/>
            <person name="Eisen J.A."/>
            <person name="Gill S.R."/>
            <person name="Heidelberg J.F."/>
            <person name="Tettelin H."/>
            <person name="Dodson R.J."/>
            <person name="Umayam L.A."/>
            <person name="Brinkac L.M."/>
            <person name="Beanan M.J."/>
            <person name="Daugherty S.C."/>
            <person name="DeBoy R.T."/>
            <person name="Durkin S.A."/>
            <person name="Kolonay J.F."/>
            <person name="Madupu R."/>
            <person name="Nelson W.C."/>
            <person name="Vamathevan J.J."/>
            <person name="Tran B."/>
            <person name="Upton J."/>
            <person name="Hansen T."/>
            <person name="Shetty J."/>
            <person name="Khouri H.M."/>
            <person name="Utterback T.R."/>
            <person name="Radune D."/>
            <person name="Ketchum K.A."/>
            <person name="Dougherty B.A."/>
            <person name="Fraser C.M."/>
        </authorList>
    </citation>
    <scope>NUCLEOTIDE SEQUENCE [LARGE SCALE GENOMIC DNA]</scope>
    <source>
        <strain>ATCC 700802 / V583</strain>
    </source>
</reference>
<feature type="chain" id="PRO_0000141440" description="4-hydroxy-tetrahydrodipicolinate reductase">
    <location>
        <begin position="1"/>
        <end position="259"/>
    </location>
</feature>
<feature type="active site" description="Proton donor/acceptor" evidence="1">
    <location>
        <position position="149"/>
    </location>
</feature>
<feature type="active site" description="Proton donor" evidence="1">
    <location>
        <position position="153"/>
    </location>
</feature>
<feature type="binding site" evidence="1">
    <location>
        <begin position="8"/>
        <end position="13"/>
    </location>
    <ligand>
        <name>NAD(+)</name>
        <dbReference type="ChEBI" id="CHEBI:57540"/>
    </ligand>
</feature>
<feature type="binding site" evidence="1">
    <location>
        <begin position="93"/>
        <end position="95"/>
    </location>
    <ligand>
        <name>NAD(+)</name>
        <dbReference type="ChEBI" id="CHEBI:57540"/>
    </ligand>
</feature>
<feature type="binding site" evidence="1">
    <location>
        <begin position="119"/>
        <end position="122"/>
    </location>
    <ligand>
        <name>NAD(+)</name>
        <dbReference type="ChEBI" id="CHEBI:57540"/>
    </ligand>
</feature>
<feature type="binding site" evidence="1">
    <location>
        <position position="150"/>
    </location>
    <ligand>
        <name>(S)-2,3,4,5-tetrahydrodipicolinate</name>
        <dbReference type="ChEBI" id="CHEBI:16845"/>
    </ligand>
</feature>
<feature type="binding site" evidence="1">
    <location>
        <begin position="159"/>
        <end position="160"/>
    </location>
    <ligand>
        <name>(S)-2,3,4,5-tetrahydrodipicolinate</name>
        <dbReference type="ChEBI" id="CHEBI:16845"/>
    </ligand>
</feature>
<proteinExistence type="inferred from homology"/>
<name>DAPB_ENTFA</name>
<gene>
    <name evidence="1" type="primary">dapB</name>
    <name type="ordered locus">EF_1557</name>
</gene>
<protein>
    <recommendedName>
        <fullName evidence="1">4-hydroxy-tetrahydrodipicolinate reductase</fullName>
        <shortName evidence="1">HTPA reductase</shortName>
        <ecNumber evidence="1">1.17.1.8</ecNumber>
    </recommendedName>
</protein>
<keyword id="KW-0028">Amino-acid biosynthesis</keyword>
<keyword id="KW-0963">Cytoplasm</keyword>
<keyword id="KW-0220">Diaminopimelate biosynthesis</keyword>
<keyword id="KW-0457">Lysine biosynthesis</keyword>
<keyword id="KW-0520">NAD</keyword>
<keyword id="KW-0521">NADP</keyword>
<keyword id="KW-0560">Oxidoreductase</keyword>
<keyword id="KW-1185">Reference proteome</keyword>
<evidence type="ECO:0000255" key="1">
    <source>
        <dbReference type="HAMAP-Rule" id="MF_00102"/>
    </source>
</evidence>
<evidence type="ECO:0000305" key="2"/>
<sequence>MIKIIVAGFKGRMGSTATQMVLETADFELVGVYDPHEAQETVSFNDETAIPVFQRLEEVLAVKPDVWIDFTVPEAAYPNTRFALEHGMAPVVGTTGFTEEQINELTNLSREKAIGGLIAPNFAIGAVLMMQFAQKAAQYFPDVEIIELHHDNKLDAPSGTAIKTAEMIQEVRPAKKQGNPQEVESIPGARGADFEGLRIHSVRLPGLVAHQQVQFGSVGEGLTIRHDSYDRRSFMTGVALACRQVVQRTELLYGLEQML</sequence>
<accession>Q834S6</accession>